<proteinExistence type="evidence at protein level"/>
<comment type="function">
    <text evidence="1">DNA-dependent RNA polymerase catalyzes the transcription of DNA into RNA using the four ribonucleoside triphosphates as substrates.</text>
</comment>
<comment type="catalytic activity">
    <reaction evidence="1">
        <text>RNA(n) + a ribonucleoside 5'-triphosphate = RNA(n+1) + diphosphate</text>
        <dbReference type="Rhea" id="RHEA:21248"/>
        <dbReference type="Rhea" id="RHEA-COMP:14527"/>
        <dbReference type="Rhea" id="RHEA-COMP:17342"/>
        <dbReference type="ChEBI" id="CHEBI:33019"/>
        <dbReference type="ChEBI" id="CHEBI:61557"/>
        <dbReference type="ChEBI" id="CHEBI:140395"/>
        <dbReference type="EC" id="2.7.7.6"/>
    </reaction>
</comment>
<comment type="cofactor">
    <cofactor evidence="1">
        <name>Zn(2+)</name>
        <dbReference type="ChEBI" id="CHEBI:29105"/>
    </cofactor>
    <text evidence="1">Binds 1 Zn(2+) ion per subunit.</text>
</comment>
<comment type="subunit">
    <text evidence="1">In plastids the minimal PEP RNA polymerase catalytic core is composed of four subunits: alpha, beta, beta', and beta''. When a (nuclear-encoded) sigma factor is associated with the core the holoenzyme is formed, which can initiate transcription.</text>
</comment>
<comment type="subcellular location">
    <subcellularLocation>
        <location evidence="1">Plastid</location>
        <location evidence="1">Chloroplast</location>
    </subcellularLocation>
</comment>
<comment type="similarity">
    <text evidence="1">Belongs to the RNA polymerase beta' chain family. RpoC2 subfamily.</text>
</comment>
<reference key="1">
    <citation type="journal article" date="2000" name="Eur. J. Biochem.">
        <title>The multisubunit chloroplast RNA polymerase A from mustard (Sinapis alba L.). Integration of a prokaryotic core into a larger complex with organelle-specific functions.</title>
        <authorList>
            <person name="Pfannschmidt T."/>
            <person name="Ogrzewalla K."/>
            <person name="Baginsky S."/>
            <person name="Sickmann A."/>
            <person name="Meyer H.E."/>
            <person name="Link G."/>
        </authorList>
    </citation>
    <scope>NUCLEOTIDE SEQUENCE [GENOMIC DNA]</scope>
    <scope>PROTEIN SEQUENCE OF 6-20</scope>
    <scope>CHARACTERIZATION</scope>
    <source>
        <strain>cv. Albatros</strain>
        <tissue>Cotyledon</tissue>
    </source>
</reference>
<gene>
    <name evidence="1" type="primary">rpoC2</name>
</gene>
<geneLocation type="chloroplast"/>
<protein>
    <recommendedName>
        <fullName evidence="1">DNA-directed RNA polymerase subunit beta''</fullName>
        <ecNumber evidence="1">2.7.7.6</ecNumber>
    </recommendedName>
    <alternativeName>
        <fullName evidence="1">PEP</fullName>
    </alternativeName>
    <alternativeName>
        <fullName evidence="1">Plastid-encoded RNA polymerase subunit beta''</fullName>
        <shortName evidence="1">RNA polymerase subunit beta''</shortName>
    </alternativeName>
</protein>
<feature type="chain" id="PRO_0000067948" description="DNA-directed RNA polymerase subunit beta''">
    <location>
        <begin position="1"/>
        <end position="1384"/>
    </location>
</feature>
<feature type="binding site" evidence="1">
    <location>
        <position position="224"/>
    </location>
    <ligand>
        <name>Zn(2+)</name>
        <dbReference type="ChEBI" id="CHEBI:29105"/>
    </ligand>
</feature>
<feature type="binding site" evidence="1">
    <location>
        <position position="297"/>
    </location>
    <ligand>
        <name>Zn(2+)</name>
        <dbReference type="ChEBI" id="CHEBI:29105"/>
    </ligand>
</feature>
<feature type="binding site" evidence="1">
    <location>
        <position position="304"/>
    </location>
    <ligand>
        <name>Zn(2+)</name>
        <dbReference type="ChEBI" id="CHEBI:29105"/>
    </ligand>
</feature>
<feature type="binding site" evidence="1">
    <location>
        <position position="307"/>
    </location>
    <ligand>
        <name>Zn(2+)</name>
        <dbReference type="ChEBI" id="CHEBI:29105"/>
    </ligand>
</feature>
<accession>Q9THV5</accession>
<organism>
    <name type="scientific">Sinapis alba</name>
    <name type="common">White mustard</name>
    <name type="synonym">Brassica hirta</name>
    <dbReference type="NCBI Taxonomy" id="3728"/>
    <lineage>
        <taxon>Eukaryota</taxon>
        <taxon>Viridiplantae</taxon>
        <taxon>Streptophyta</taxon>
        <taxon>Embryophyta</taxon>
        <taxon>Tracheophyta</taxon>
        <taxon>Spermatophyta</taxon>
        <taxon>Magnoliopsida</taxon>
        <taxon>eudicotyledons</taxon>
        <taxon>Gunneridae</taxon>
        <taxon>Pentapetalae</taxon>
        <taxon>rosids</taxon>
        <taxon>malvids</taxon>
        <taxon>Brassicales</taxon>
        <taxon>Brassicaceae</taxon>
        <taxon>Brassiceae</taxon>
        <taxon>Sinapis</taxon>
    </lineage>
</organism>
<dbReference type="EC" id="2.7.7.6" evidence="1"/>
<dbReference type="EMBL" id="AJ243754">
    <property type="protein sequence ID" value="CAB48415.2"/>
    <property type="molecule type" value="Genomic_DNA"/>
</dbReference>
<dbReference type="SMR" id="Q9THV5"/>
<dbReference type="GO" id="GO:0009507">
    <property type="term" value="C:chloroplast"/>
    <property type="evidence" value="ECO:0007669"/>
    <property type="project" value="UniProtKB-SubCell"/>
</dbReference>
<dbReference type="GO" id="GO:0000428">
    <property type="term" value="C:DNA-directed RNA polymerase complex"/>
    <property type="evidence" value="ECO:0007669"/>
    <property type="project" value="UniProtKB-KW"/>
</dbReference>
<dbReference type="GO" id="GO:0005739">
    <property type="term" value="C:mitochondrion"/>
    <property type="evidence" value="ECO:0007669"/>
    <property type="project" value="GOC"/>
</dbReference>
<dbReference type="GO" id="GO:0003677">
    <property type="term" value="F:DNA binding"/>
    <property type="evidence" value="ECO:0007669"/>
    <property type="project" value="UniProtKB-UniRule"/>
</dbReference>
<dbReference type="GO" id="GO:0003899">
    <property type="term" value="F:DNA-directed RNA polymerase activity"/>
    <property type="evidence" value="ECO:0007669"/>
    <property type="project" value="UniProtKB-UniRule"/>
</dbReference>
<dbReference type="GO" id="GO:0008270">
    <property type="term" value="F:zinc ion binding"/>
    <property type="evidence" value="ECO:0007669"/>
    <property type="project" value="UniProtKB-UniRule"/>
</dbReference>
<dbReference type="GO" id="GO:0006351">
    <property type="term" value="P:DNA-templated transcription"/>
    <property type="evidence" value="ECO:0007669"/>
    <property type="project" value="UniProtKB-UniRule"/>
</dbReference>
<dbReference type="CDD" id="cd02655">
    <property type="entry name" value="RNAP_beta'_C"/>
    <property type="match status" value="1"/>
</dbReference>
<dbReference type="FunFam" id="1.10.132.30:FF:000002">
    <property type="entry name" value="DNA-directed RNA polymerase subunit beta"/>
    <property type="match status" value="1"/>
</dbReference>
<dbReference type="FunFam" id="1.10.1790.20:FF:000002">
    <property type="entry name" value="DNA-directed RNA polymerase subunit beta"/>
    <property type="match status" value="1"/>
</dbReference>
<dbReference type="FunFam" id="1.10.274.100:FF:000011">
    <property type="entry name" value="DNA-directed RNA polymerase subunit beta"/>
    <property type="match status" value="1"/>
</dbReference>
<dbReference type="Gene3D" id="1.10.132.30">
    <property type="match status" value="1"/>
</dbReference>
<dbReference type="Gene3D" id="1.10.150.390">
    <property type="match status" value="1"/>
</dbReference>
<dbReference type="Gene3D" id="1.10.1790.20">
    <property type="match status" value="1"/>
</dbReference>
<dbReference type="Gene3D" id="1.10.274.100">
    <property type="entry name" value="RNA polymerase Rpb1, domain 3"/>
    <property type="match status" value="1"/>
</dbReference>
<dbReference type="HAMAP" id="MF_01324">
    <property type="entry name" value="RNApol_bact_RpoC2"/>
    <property type="match status" value="1"/>
</dbReference>
<dbReference type="InterPro" id="IPR012756">
    <property type="entry name" value="DNA-dir_RpoC2_beta_pp"/>
</dbReference>
<dbReference type="InterPro" id="IPR050254">
    <property type="entry name" value="RNA_pol_beta''_euk"/>
</dbReference>
<dbReference type="InterPro" id="IPR042102">
    <property type="entry name" value="RNA_pol_Rpb1_3_sf"/>
</dbReference>
<dbReference type="InterPro" id="IPR007083">
    <property type="entry name" value="RNA_pol_Rpb1_4"/>
</dbReference>
<dbReference type="InterPro" id="IPR007081">
    <property type="entry name" value="RNA_pol_Rpb1_5"/>
</dbReference>
<dbReference type="InterPro" id="IPR038120">
    <property type="entry name" value="Rpb1_funnel_sf"/>
</dbReference>
<dbReference type="NCBIfam" id="TIGR02388">
    <property type="entry name" value="rpoC2_cyan"/>
    <property type="match status" value="1"/>
</dbReference>
<dbReference type="PANTHER" id="PTHR34995">
    <property type="entry name" value="DNA-DIRECTED RNA POLYMERASE SUBUNIT BETA"/>
    <property type="match status" value="1"/>
</dbReference>
<dbReference type="PANTHER" id="PTHR34995:SF1">
    <property type="entry name" value="DNA-DIRECTED RNA POLYMERASE SUBUNIT BETA"/>
    <property type="match status" value="1"/>
</dbReference>
<dbReference type="Pfam" id="PF05000">
    <property type="entry name" value="RNA_pol_Rpb1_4"/>
    <property type="match status" value="1"/>
</dbReference>
<dbReference type="Pfam" id="PF04998">
    <property type="entry name" value="RNA_pol_Rpb1_5"/>
    <property type="match status" value="2"/>
</dbReference>
<dbReference type="SUPFAM" id="SSF64484">
    <property type="entry name" value="beta and beta-prime subunits of DNA dependent RNA-polymerase"/>
    <property type="match status" value="1"/>
</dbReference>
<sequence length="1384" mass="157742">MEVLMAERANLVFHNKVIDGTAIKRLISRLIDHFGMAYTSHILDQVKTLGFQQATATSISLGIDDLLTIPSKGWLVQDAEQQSLILEKHHHYGNVHAVEKLRQSIEIWYATSEYLRQEMNPNFRMTDPFNPVHMMSFSGARGNASQVHQLVGMRGLMSDPQGQMIDLPIQSNLREGLSLTEYIISCYGARKGVVDTAVRQSDAGYLTRRLVEVVQHIVVRRTDCGTIRGISVSPRNKSRMMSERIFIQTLIGRVLADDIYIGSRCVAFRNQDLGIGLVNRFITFGTQPISIRTPFTCRSTSWICRLCYGRSPTHGDLVELGEAVGIIAGQSIGEPGTQLTLRTFHTGGVFTGGTAEHVRAPYNGKIKFNEDLVHSTRTRHGHPAFLCYIDLSVIIESEDIIHSVTIPPKSFLLVQNDQYVESEQVIAEIREGTYTFQFKERVRKYIYSDSEGGMHWSTDVSHAPEFTYSNVHLLPKTSHLWILSGGSCGSSLILFSIHKDQDQMNIPFLSVERKSISSLSVNNDQVSQKFFSSDFSDKKILIPNYSELNGIVGTSHYNFIYSAIFHENSDLLAKRRRNRFLIPFQSIQEQEQEKEFIPHSGISVEIPINGIFRRNSIFAFFDDPRYRRKSSGILKYGTLKADSIIQKEDMIEYRGVQKFKTKYEMKVDRFFFIPEEVHILPESSAIMVENYSIIGVDTRITLNIRSQVGGLIRVERKKKRIELKIFSGDIHFPDKTDKISRHSGILIPPGRGKTNSKESKIVKNWIYVQRITPTKKKFFVLVRPVATYEIADSINLATLFPKDLFREKDNIQLRVFNYILYGNGKPTRGISDTSIQLVRTCLVLNWDQDNKNSSLEEVRAFFVEVNTKGLIRDFIRIGLVKSHISYIRKRNNPSSEKKEGSDHSMNPFYSISPKAGILHQSLRQNHGTIRMFLNRNRNPILLILSSSNCFRIGPFNHVKYHNVINQSIKKKTSNYIKNCRAPYGTAIQILIFIHFAFTKLINQISCIKYLHLQTSNVFFPVIHSYLIDENGRIFNLDPYSNLVLNPFKLNWYFLHQNYNNNYCEETSTIISLGQFFCENVCIAKKEPYLKSGQVLIVQRDSVVIRSAKPYLATPGAKVHGHYREILYEGDTLVTFIYEKSRSGDITQGLPKVEQVLEVRSIDSISLNLEKRIKGWNRCITRILGIPWGFLIGAELTIVQSRISLVNKIKQVYRSQGVQIHNRHIEIIVRQITSKVLVSEEGMSNVFLPGELIGLLRAERTGRALEEAICYRAVLLGITRASLNTQSFISEASFQETARVLAKAALRGRIDWLKGLKENVVLGGVIPPGPGSQRIGALSTATYQHSFGKNKNYLIRGRYERYFILPQGILCLFYQIQNLPFLELH</sequence>
<evidence type="ECO:0000255" key="1">
    <source>
        <dbReference type="HAMAP-Rule" id="MF_01324"/>
    </source>
</evidence>
<keyword id="KW-0150">Chloroplast</keyword>
<keyword id="KW-0903">Direct protein sequencing</keyword>
<keyword id="KW-0240">DNA-directed RNA polymerase</keyword>
<keyword id="KW-0479">Metal-binding</keyword>
<keyword id="KW-0548">Nucleotidyltransferase</keyword>
<keyword id="KW-0934">Plastid</keyword>
<keyword id="KW-0804">Transcription</keyword>
<keyword id="KW-0808">Transferase</keyword>
<keyword id="KW-0862">Zinc</keyword>
<name>RPOC2_SINAL</name>